<reference key="1">
    <citation type="journal article" date="2000" name="Mutat. Res.">
        <title>Mutation in recR gene of Deinococcus radiodurans and possible involvement of its product in the repair of DNA interstrand cross-links.</title>
        <authorList>
            <person name="Kitayama S."/>
            <person name="Narumi I."/>
            <person name="Kikuchi M."/>
            <person name="Watanabe H."/>
        </authorList>
    </citation>
    <scope>NUCLEOTIDE SEQUENCE [GENOMIC DNA]</scope>
    <source>
        <strain>ATCC 13939 / DSM 20539 / JCM 16871 / CCUG 27074 / LMG 4051 / NBRC 15346 / NCIMB 9279 / VKM B-1422 / R1</strain>
    </source>
</reference>
<reference key="2">
    <citation type="journal article" date="1999" name="Science">
        <title>Genome sequence of the radioresistant bacterium Deinococcus radiodurans R1.</title>
        <authorList>
            <person name="White O."/>
            <person name="Eisen J.A."/>
            <person name="Heidelberg J.F."/>
            <person name="Hickey E.K."/>
            <person name="Peterson J.D."/>
            <person name="Dodson R.J."/>
            <person name="Haft D.H."/>
            <person name="Gwinn M.L."/>
            <person name="Nelson W.C."/>
            <person name="Richardson D.L."/>
            <person name="Moffat K.S."/>
            <person name="Qin H."/>
            <person name="Jiang L."/>
            <person name="Pamphile W."/>
            <person name="Crosby M."/>
            <person name="Shen M."/>
            <person name="Vamathevan J.J."/>
            <person name="Lam P."/>
            <person name="McDonald L.A."/>
            <person name="Utterback T.R."/>
            <person name="Zalewski C."/>
            <person name="Makarova K.S."/>
            <person name="Aravind L."/>
            <person name="Daly M.J."/>
            <person name="Minton K.W."/>
            <person name="Fleischmann R.D."/>
            <person name="Ketchum K.A."/>
            <person name="Nelson K.E."/>
            <person name="Salzberg S.L."/>
            <person name="Smith H.O."/>
            <person name="Venter J.C."/>
            <person name="Fraser C.M."/>
        </authorList>
    </citation>
    <scope>NUCLEOTIDE SEQUENCE [LARGE SCALE GENOMIC DNA]</scope>
    <source>
        <strain>ATCC 13939 / DSM 20539 / JCM 16871 / CCUG 27074 / LMG 4051 / NBRC 15346 / NCIMB 9279 / VKM B-1422 / R1</strain>
    </source>
</reference>
<protein>
    <recommendedName>
        <fullName evidence="1">Recombination protein RecR</fullName>
    </recommendedName>
</protein>
<comment type="function">
    <text evidence="1">May play a role in DNA repair. It seems to be involved in an RecBC-independent recombinational process of DNA repair. It may act with RecF and RecO.</text>
</comment>
<comment type="similarity">
    <text evidence="1">Belongs to the RecR family.</text>
</comment>
<sequence>MKYPPSLVSLIRELSRLPGIGPKSAQRLAFHLFEQPREDIERLASALLEAKRDLHVCPICFNITDAEKCDVCADPSRDQRTICVVEEPGDVIALERSGEYRGLYHVLHGVLSPMNGVGPDKLHIKPLLPRVGQGMEVILATGTTVEGDATALYLQRLLEPLGAAISRIAYGVPVGGSLEYTDEVTLGRALTGRQTVSKPQPPQRPGDEDGADGAAVPASR</sequence>
<dbReference type="EMBL" id="AB020240">
    <property type="protein sequence ID" value="BAA34648.1"/>
    <property type="molecule type" value="Genomic_DNA"/>
</dbReference>
<dbReference type="EMBL" id="AE000513">
    <property type="protein sequence ID" value="AAF09785.1"/>
    <property type="molecule type" value="Genomic_DNA"/>
</dbReference>
<dbReference type="PIR" id="H75547">
    <property type="entry name" value="H75547"/>
</dbReference>
<dbReference type="RefSeq" id="NP_293922.1">
    <property type="nucleotide sequence ID" value="NC_001263.1"/>
</dbReference>
<dbReference type="RefSeq" id="WP_010886844.1">
    <property type="nucleotide sequence ID" value="NC_001263.1"/>
</dbReference>
<dbReference type="PDB" id="1VDD">
    <property type="method" value="X-ray"/>
    <property type="resolution" value="2.50 A"/>
    <property type="chains" value="A/B/C/D=1-220"/>
</dbReference>
<dbReference type="PDB" id="2V1C">
    <property type="method" value="X-ray"/>
    <property type="resolution" value="3.80 A"/>
    <property type="chains" value="A/B=1-220"/>
</dbReference>
<dbReference type="PDB" id="4JCV">
    <property type="method" value="X-ray"/>
    <property type="resolution" value="3.34 A"/>
    <property type="chains" value="A/B/C/D=2-220"/>
</dbReference>
<dbReference type="PDBsum" id="1VDD"/>
<dbReference type="PDBsum" id="2V1C"/>
<dbReference type="PDBsum" id="4JCV"/>
<dbReference type="SMR" id="Q9ZNA2"/>
<dbReference type="FunCoup" id="Q9ZNA2">
    <property type="interactions" value="250"/>
</dbReference>
<dbReference type="IntAct" id="Q9ZNA2">
    <property type="interactions" value="1"/>
</dbReference>
<dbReference type="MINT" id="Q9ZNA2"/>
<dbReference type="STRING" id="243230.DR_0198"/>
<dbReference type="DrugBank" id="DB03366">
    <property type="generic name" value="Imidazole"/>
</dbReference>
<dbReference type="PaxDb" id="243230-DR_0198"/>
<dbReference type="EnsemblBacteria" id="AAF09785">
    <property type="protein sequence ID" value="AAF09785"/>
    <property type="gene ID" value="DR_0198"/>
</dbReference>
<dbReference type="GeneID" id="69516429"/>
<dbReference type="KEGG" id="dra:DR_0198"/>
<dbReference type="PATRIC" id="fig|243230.17.peg.362"/>
<dbReference type="eggNOG" id="COG0353">
    <property type="taxonomic scope" value="Bacteria"/>
</dbReference>
<dbReference type="HOGENOM" id="CLU_060739_1_0_0"/>
<dbReference type="InParanoid" id="Q9ZNA2"/>
<dbReference type="OrthoDB" id="9802672at2"/>
<dbReference type="EvolutionaryTrace" id="Q9ZNA2"/>
<dbReference type="Proteomes" id="UP000002524">
    <property type="component" value="Chromosome 1"/>
</dbReference>
<dbReference type="GO" id="GO:0003677">
    <property type="term" value="F:DNA binding"/>
    <property type="evidence" value="ECO:0007669"/>
    <property type="project" value="UniProtKB-UniRule"/>
</dbReference>
<dbReference type="GO" id="GO:0008270">
    <property type="term" value="F:zinc ion binding"/>
    <property type="evidence" value="ECO:0007669"/>
    <property type="project" value="UniProtKB-KW"/>
</dbReference>
<dbReference type="GO" id="GO:0006302">
    <property type="term" value="P:double-strand break repair"/>
    <property type="evidence" value="ECO:0000315"/>
    <property type="project" value="CACAO"/>
</dbReference>
<dbReference type="GO" id="GO:0000725">
    <property type="term" value="P:recombinational repair"/>
    <property type="evidence" value="ECO:0000318"/>
    <property type="project" value="GO_Central"/>
</dbReference>
<dbReference type="CDD" id="cd01025">
    <property type="entry name" value="TOPRIM_recR"/>
    <property type="match status" value="1"/>
</dbReference>
<dbReference type="FunFam" id="1.10.8.420:FF:000001">
    <property type="entry name" value="Recombination protein RecR"/>
    <property type="match status" value="1"/>
</dbReference>
<dbReference type="Gene3D" id="3.30.60.80">
    <property type="match status" value="1"/>
</dbReference>
<dbReference type="Gene3D" id="3.40.1360.10">
    <property type="match status" value="1"/>
</dbReference>
<dbReference type="Gene3D" id="6.10.250.240">
    <property type="match status" value="1"/>
</dbReference>
<dbReference type="Gene3D" id="1.10.8.420">
    <property type="entry name" value="RecR Domain 1"/>
    <property type="match status" value="1"/>
</dbReference>
<dbReference type="HAMAP" id="MF_00017">
    <property type="entry name" value="RecR"/>
    <property type="match status" value="1"/>
</dbReference>
<dbReference type="InterPro" id="IPR000093">
    <property type="entry name" value="DNA_Rcmb_RecR"/>
</dbReference>
<dbReference type="InterPro" id="IPR003583">
    <property type="entry name" value="Hlx-hairpin-Hlx_DNA-bd_motif"/>
</dbReference>
<dbReference type="InterPro" id="IPR023627">
    <property type="entry name" value="Rcmb_RecR"/>
</dbReference>
<dbReference type="InterPro" id="IPR015967">
    <property type="entry name" value="Rcmb_RecR_Znf"/>
</dbReference>
<dbReference type="InterPro" id="IPR006171">
    <property type="entry name" value="TOPRIM_dom"/>
</dbReference>
<dbReference type="InterPro" id="IPR034137">
    <property type="entry name" value="TOPRIM_RecR"/>
</dbReference>
<dbReference type="NCBIfam" id="TIGR00615">
    <property type="entry name" value="recR"/>
    <property type="match status" value="1"/>
</dbReference>
<dbReference type="PANTHER" id="PTHR30446">
    <property type="entry name" value="RECOMBINATION PROTEIN RECR"/>
    <property type="match status" value="1"/>
</dbReference>
<dbReference type="PANTHER" id="PTHR30446:SF0">
    <property type="entry name" value="RECOMBINATION PROTEIN RECR"/>
    <property type="match status" value="1"/>
</dbReference>
<dbReference type="Pfam" id="PF21175">
    <property type="entry name" value="RecR_C"/>
    <property type="match status" value="1"/>
</dbReference>
<dbReference type="Pfam" id="PF21176">
    <property type="entry name" value="RecR_HhH"/>
    <property type="match status" value="1"/>
</dbReference>
<dbReference type="Pfam" id="PF02132">
    <property type="entry name" value="RecR_ZnF"/>
    <property type="match status" value="1"/>
</dbReference>
<dbReference type="Pfam" id="PF13662">
    <property type="entry name" value="Toprim_4"/>
    <property type="match status" value="1"/>
</dbReference>
<dbReference type="SMART" id="SM00278">
    <property type="entry name" value="HhH1"/>
    <property type="match status" value="1"/>
</dbReference>
<dbReference type="SMART" id="SM00493">
    <property type="entry name" value="TOPRIM"/>
    <property type="match status" value="1"/>
</dbReference>
<dbReference type="SUPFAM" id="SSF111304">
    <property type="entry name" value="Recombination protein RecR"/>
    <property type="match status" value="1"/>
</dbReference>
<dbReference type="PROSITE" id="PS01300">
    <property type="entry name" value="RECR"/>
    <property type="match status" value="1"/>
</dbReference>
<dbReference type="PROSITE" id="PS50880">
    <property type="entry name" value="TOPRIM"/>
    <property type="match status" value="1"/>
</dbReference>
<organism>
    <name type="scientific">Deinococcus radiodurans (strain ATCC 13939 / DSM 20539 / JCM 16871 / CCUG 27074 / LMG 4051 / NBRC 15346 / NCIMB 9279 / VKM B-1422 / R1)</name>
    <dbReference type="NCBI Taxonomy" id="243230"/>
    <lineage>
        <taxon>Bacteria</taxon>
        <taxon>Thermotogati</taxon>
        <taxon>Deinococcota</taxon>
        <taxon>Deinococci</taxon>
        <taxon>Deinococcales</taxon>
        <taxon>Deinococcaceae</taxon>
        <taxon>Deinococcus</taxon>
    </lineage>
</organism>
<name>RECR_DEIRA</name>
<proteinExistence type="evidence at protein level"/>
<keyword id="KW-0002">3D-structure</keyword>
<keyword id="KW-0227">DNA damage</keyword>
<keyword id="KW-0233">DNA recombination</keyword>
<keyword id="KW-0234">DNA repair</keyword>
<keyword id="KW-0479">Metal-binding</keyword>
<keyword id="KW-1185">Reference proteome</keyword>
<keyword id="KW-0862">Zinc</keyword>
<keyword id="KW-0863">Zinc-finger</keyword>
<feature type="chain" id="PRO_0000190315" description="Recombination protein RecR">
    <location>
        <begin position="1"/>
        <end position="220"/>
    </location>
</feature>
<feature type="domain" description="Toprim" evidence="1">
    <location>
        <begin position="80"/>
        <end position="173"/>
    </location>
</feature>
<feature type="zinc finger region" description="C4-type" evidence="1">
    <location>
        <begin position="57"/>
        <end position="72"/>
    </location>
</feature>
<feature type="region of interest" description="Disordered" evidence="2">
    <location>
        <begin position="190"/>
        <end position="220"/>
    </location>
</feature>
<feature type="sequence conflict" description="In Ref. 1; BAA34648." evidence="3" ref="1">
    <original>P</original>
    <variation>H</variation>
    <location>
        <position position="88"/>
    </location>
</feature>
<feature type="helix" evidence="4">
    <location>
        <begin position="5"/>
        <end position="15"/>
    </location>
</feature>
<feature type="helix" evidence="4">
    <location>
        <begin position="22"/>
        <end position="32"/>
    </location>
</feature>
<feature type="strand" evidence="4">
    <location>
        <begin position="33"/>
        <end position="35"/>
    </location>
</feature>
<feature type="helix" evidence="4">
    <location>
        <begin position="37"/>
        <end position="53"/>
    </location>
</feature>
<feature type="strand" evidence="4">
    <location>
        <begin position="58"/>
        <end position="60"/>
    </location>
</feature>
<feature type="strand" evidence="4">
    <location>
        <begin position="63"/>
        <end position="68"/>
    </location>
</feature>
<feature type="helix" evidence="4">
    <location>
        <begin position="70"/>
        <end position="73"/>
    </location>
</feature>
<feature type="strand" evidence="4">
    <location>
        <begin position="75"/>
        <end position="77"/>
    </location>
</feature>
<feature type="strand" evidence="4">
    <location>
        <begin position="81"/>
        <end position="87"/>
    </location>
</feature>
<feature type="helix" evidence="4">
    <location>
        <begin position="88"/>
        <end position="93"/>
    </location>
</feature>
<feature type="turn" evidence="4">
    <location>
        <begin position="94"/>
        <end position="97"/>
    </location>
</feature>
<feature type="strand" evidence="4">
    <location>
        <begin position="102"/>
        <end position="106"/>
    </location>
</feature>
<feature type="helix" evidence="4">
    <location>
        <begin position="113"/>
        <end position="115"/>
    </location>
</feature>
<feature type="strand" evidence="4">
    <location>
        <begin position="121"/>
        <end position="123"/>
    </location>
</feature>
<feature type="helix" evidence="4">
    <location>
        <begin position="125"/>
        <end position="130"/>
    </location>
</feature>
<feature type="strand" evidence="4">
    <location>
        <begin position="136"/>
        <end position="139"/>
    </location>
</feature>
<feature type="helix" evidence="4">
    <location>
        <begin position="145"/>
        <end position="158"/>
    </location>
</feature>
<feature type="strand" evidence="4">
    <location>
        <begin position="164"/>
        <end position="167"/>
    </location>
</feature>
<feature type="strand" evidence="5">
    <location>
        <begin position="170"/>
        <end position="172"/>
    </location>
</feature>
<feature type="helix" evidence="4">
    <location>
        <begin position="178"/>
        <end position="180"/>
    </location>
</feature>
<feature type="helix" evidence="4">
    <location>
        <begin position="183"/>
        <end position="191"/>
    </location>
</feature>
<feature type="strand" evidence="4">
    <location>
        <begin position="194"/>
        <end position="197"/>
    </location>
</feature>
<evidence type="ECO:0000255" key="1">
    <source>
        <dbReference type="HAMAP-Rule" id="MF_00017"/>
    </source>
</evidence>
<evidence type="ECO:0000256" key="2">
    <source>
        <dbReference type="SAM" id="MobiDB-lite"/>
    </source>
</evidence>
<evidence type="ECO:0000305" key="3"/>
<evidence type="ECO:0007829" key="4">
    <source>
        <dbReference type="PDB" id="1VDD"/>
    </source>
</evidence>
<evidence type="ECO:0007829" key="5">
    <source>
        <dbReference type="PDB" id="4JCV"/>
    </source>
</evidence>
<accession>Q9ZNA2</accession>
<gene>
    <name evidence="1" type="primary">recR</name>
    <name type="ordered locus">DR_0198</name>
</gene>